<evidence type="ECO:0000255" key="1">
    <source>
        <dbReference type="HAMAP-Rule" id="MF_01603"/>
    </source>
</evidence>
<dbReference type="EC" id="2.7.1.167" evidence="1"/>
<dbReference type="EC" id="2.7.7.70" evidence="1"/>
<dbReference type="EMBL" id="CP000487">
    <property type="protein sequence ID" value="ABK83331.1"/>
    <property type="molecule type" value="Genomic_DNA"/>
</dbReference>
<dbReference type="SMR" id="A0RQR9"/>
<dbReference type="KEGG" id="cff:CFF8240_1413"/>
<dbReference type="eggNOG" id="COG0615">
    <property type="taxonomic scope" value="Bacteria"/>
</dbReference>
<dbReference type="eggNOG" id="COG2870">
    <property type="taxonomic scope" value="Bacteria"/>
</dbReference>
<dbReference type="HOGENOM" id="CLU_021150_2_1_7"/>
<dbReference type="UniPathway" id="UPA00356">
    <property type="reaction ID" value="UER00437"/>
</dbReference>
<dbReference type="UniPathway" id="UPA00356">
    <property type="reaction ID" value="UER00439"/>
</dbReference>
<dbReference type="Proteomes" id="UP000000760">
    <property type="component" value="Chromosome"/>
</dbReference>
<dbReference type="GO" id="GO:0005829">
    <property type="term" value="C:cytosol"/>
    <property type="evidence" value="ECO:0007669"/>
    <property type="project" value="TreeGrafter"/>
</dbReference>
<dbReference type="GO" id="GO:0005524">
    <property type="term" value="F:ATP binding"/>
    <property type="evidence" value="ECO:0007669"/>
    <property type="project" value="UniProtKB-UniRule"/>
</dbReference>
<dbReference type="GO" id="GO:0033785">
    <property type="term" value="F:heptose 7-phosphate kinase activity"/>
    <property type="evidence" value="ECO:0007669"/>
    <property type="project" value="UniProtKB-UniRule"/>
</dbReference>
<dbReference type="GO" id="GO:0033786">
    <property type="term" value="F:heptose-1-phosphate adenylyltransferase activity"/>
    <property type="evidence" value="ECO:0007669"/>
    <property type="project" value="UniProtKB-UniRule"/>
</dbReference>
<dbReference type="GO" id="GO:0016773">
    <property type="term" value="F:phosphotransferase activity, alcohol group as acceptor"/>
    <property type="evidence" value="ECO:0007669"/>
    <property type="project" value="InterPro"/>
</dbReference>
<dbReference type="GO" id="GO:0097171">
    <property type="term" value="P:ADP-L-glycero-beta-D-manno-heptose biosynthetic process"/>
    <property type="evidence" value="ECO:0007669"/>
    <property type="project" value="UniProtKB-UniPathway"/>
</dbReference>
<dbReference type="CDD" id="cd01172">
    <property type="entry name" value="RfaE_like"/>
    <property type="match status" value="1"/>
</dbReference>
<dbReference type="Gene3D" id="3.40.1190.20">
    <property type="match status" value="1"/>
</dbReference>
<dbReference type="Gene3D" id="3.40.50.620">
    <property type="entry name" value="HUPs"/>
    <property type="match status" value="1"/>
</dbReference>
<dbReference type="HAMAP" id="MF_01603">
    <property type="entry name" value="HldE"/>
    <property type="match status" value="1"/>
</dbReference>
<dbReference type="InterPro" id="IPR023030">
    <property type="entry name" value="Bifunc_HldE"/>
</dbReference>
<dbReference type="InterPro" id="IPR004821">
    <property type="entry name" value="Cyt_trans-like"/>
</dbReference>
<dbReference type="InterPro" id="IPR011611">
    <property type="entry name" value="PfkB_dom"/>
</dbReference>
<dbReference type="InterPro" id="IPR011913">
    <property type="entry name" value="RfaE_dom_I"/>
</dbReference>
<dbReference type="InterPro" id="IPR011914">
    <property type="entry name" value="RfaE_dom_II"/>
</dbReference>
<dbReference type="InterPro" id="IPR029056">
    <property type="entry name" value="Ribokinase-like"/>
</dbReference>
<dbReference type="InterPro" id="IPR014729">
    <property type="entry name" value="Rossmann-like_a/b/a_fold"/>
</dbReference>
<dbReference type="NCBIfam" id="TIGR00125">
    <property type="entry name" value="cyt_tran_rel"/>
    <property type="match status" value="1"/>
</dbReference>
<dbReference type="NCBIfam" id="TIGR02198">
    <property type="entry name" value="rfaE_dom_I"/>
    <property type="match status" value="1"/>
</dbReference>
<dbReference type="NCBIfam" id="TIGR02199">
    <property type="entry name" value="rfaE_dom_II"/>
    <property type="match status" value="1"/>
</dbReference>
<dbReference type="PANTHER" id="PTHR46969">
    <property type="entry name" value="BIFUNCTIONAL PROTEIN HLDE"/>
    <property type="match status" value="1"/>
</dbReference>
<dbReference type="PANTHER" id="PTHR46969:SF1">
    <property type="entry name" value="BIFUNCTIONAL PROTEIN HLDE"/>
    <property type="match status" value="1"/>
</dbReference>
<dbReference type="Pfam" id="PF01467">
    <property type="entry name" value="CTP_transf_like"/>
    <property type="match status" value="1"/>
</dbReference>
<dbReference type="Pfam" id="PF00294">
    <property type="entry name" value="PfkB"/>
    <property type="match status" value="1"/>
</dbReference>
<dbReference type="SUPFAM" id="SSF52374">
    <property type="entry name" value="Nucleotidylyl transferase"/>
    <property type="match status" value="1"/>
</dbReference>
<dbReference type="SUPFAM" id="SSF53613">
    <property type="entry name" value="Ribokinase-like"/>
    <property type="match status" value="1"/>
</dbReference>
<name>HLDE_CAMFF</name>
<sequence length="458" mass="49954">MVNVLVVGDLMIDHYVWGSCDRISPEAPVQVVNIKNETKRLGGLGNVVSNLKTLGSEVGVISVVGDDDVGDEILELLKDRGAKTELIIKEKGRKSSQKSRIMVAHQQVLRLDTESVCEIGVSDDIISKFENILSGYDIVLLSDYGKGVLSPYLTKEIIRITKKSGKMVLIDPKGKDYSKYSGATLLTPNKKEASEALGFGINDEDDLKHALKMLKDKFKLNYSLITLSEDGIALLDEDVKKFPALAKEVFDVTGAGDSVLATLGYCLASKMSLEESIEIANLAAAVVVGKVGSADASWGEIENLKSKKSGFERKIISLDELLRVDRSGKTMVFTNGCFDILHFGHISYLQSAKKIGDMLVVGLNSDRSVKELKGDNRPVNAQSDRASMLAALEFVDFVVIFDEDTPLNLIKTLKPDILVKGADYTGKKVVGSEFVREVKLIDFVDGKSTTNIINKIKG</sequence>
<organism>
    <name type="scientific">Campylobacter fetus subsp. fetus (strain 82-40)</name>
    <dbReference type="NCBI Taxonomy" id="360106"/>
    <lineage>
        <taxon>Bacteria</taxon>
        <taxon>Pseudomonadati</taxon>
        <taxon>Campylobacterota</taxon>
        <taxon>Epsilonproteobacteria</taxon>
        <taxon>Campylobacterales</taxon>
        <taxon>Campylobacteraceae</taxon>
        <taxon>Campylobacter</taxon>
    </lineage>
</organism>
<accession>A0RQR9</accession>
<proteinExistence type="inferred from homology"/>
<reference key="1">
    <citation type="submission" date="2006-11" db="EMBL/GenBank/DDBJ databases">
        <title>Sequence of Campylobacter fetus subsp. fetus 82-40.</title>
        <authorList>
            <person name="Fouts D.E."/>
            <person name="Nelson K.E."/>
        </authorList>
    </citation>
    <scope>NUCLEOTIDE SEQUENCE [LARGE SCALE GENOMIC DNA]</scope>
    <source>
        <strain>82-40</strain>
    </source>
</reference>
<comment type="function">
    <text evidence="1">Catalyzes the phosphorylation of D-glycero-D-manno-heptose 7-phosphate at the C-1 position to selectively form D-glycero-beta-D-manno-heptose-1,7-bisphosphate.</text>
</comment>
<comment type="function">
    <text evidence="1">Catalyzes the ADP transfer from ATP to D-glycero-beta-D-manno-heptose 1-phosphate, yielding ADP-D-glycero-beta-D-manno-heptose.</text>
</comment>
<comment type="catalytic activity">
    <reaction evidence="1">
        <text>D-glycero-beta-D-manno-heptose 7-phosphate + ATP = D-glycero-beta-D-manno-heptose 1,7-bisphosphate + ADP + H(+)</text>
        <dbReference type="Rhea" id="RHEA:27473"/>
        <dbReference type="ChEBI" id="CHEBI:15378"/>
        <dbReference type="ChEBI" id="CHEBI:30616"/>
        <dbReference type="ChEBI" id="CHEBI:60204"/>
        <dbReference type="ChEBI" id="CHEBI:60208"/>
        <dbReference type="ChEBI" id="CHEBI:456216"/>
        <dbReference type="EC" id="2.7.1.167"/>
    </reaction>
</comment>
<comment type="catalytic activity">
    <reaction evidence="1">
        <text>D-glycero-beta-D-manno-heptose 1-phosphate + ATP + H(+) = ADP-D-glycero-beta-D-manno-heptose + diphosphate</text>
        <dbReference type="Rhea" id="RHEA:27465"/>
        <dbReference type="ChEBI" id="CHEBI:15378"/>
        <dbReference type="ChEBI" id="CHEBI:30616"/>
        <dbReference type="ChEBI" id="CHEBI:33019"/>
        <dbReference type="ChEBI" id="CHEBI:59967"/>
        <dbReference type="ChEBI" id="CHEBI:61593"/>
        <dbReference type="EC" id="2.7.7.70"/>
    </reaction>
</comment>
<comment type="pathway">
    <text evidence="1">Nucleotide-sugar biosynthesis; ADP-L-glycero-beta-D-manno-heptose biosynthesis; ADP-L-glycero-beta-D-manno-heptose from D-glycero-beta-D-manno-heptose 7-phosphate: step 1/4.</text>
</comment>
<comment type="pathway">
    <text evidence="1">Nucleotide-sugar biosynthesis; ADP-L-glycero-beta-D-manno-heptose biosynthesis; ADP-L-glycero-beta-D-manno-heptose from D-glycero-beta-D-manno-heptose 7-phosphate: step 3/4.</text>
</comment>
<comment type="subunit">
    <text evidence="1">Homodimer.</text>
</comment>
<comment type="similarity">
    <text evidence="1">In the N-terminal section; belongs to the carbohydrate kinase PfkB family.</text>
</comment>
<comment type="similarity">
    <text evidence="1">In the C-terminal section; belongs to the cytidylyltransferase family.</text>
</comment>
<feature type="chain" id="PRO_0000291670" description="Bifunctional protein HldE">
    <location>
        <begin position="1"/>
        <end position="458"/>
    </location>
</feature>
<feature type="region of interest" description="Ribokinase">
    <location>
        <begin position="1"/>
        <end position="311"/>
    </location>
</feature>
<feature type="region of interest" description="Cytidylyltransferase">
    <location>
        <begin position="333"/>
        <end position="458"/>
    </location>
</feature>
<feature type="active site" evidence="1">
    <location>
        <position position="257"/>
    </location>
</feature>
<feature type="binding site" evidence="1">
    <location>
        <begin position="189"/>
        <end position="192"/>
    </location>
    <ligand>
        <name>ATP</name>
        <dbReference type="ChEBI" id="CHEBI:30616"/>
    </ligand>
</feature>
<gene>
    <name evidence="1" type="primary">hldE</name>
    <name type="ordered locus">CFF8240_1413</name>
</gene>
<keyword id="KW-0067">ATP-binding</keyword>
<keyword id="KW-0119">Carbohydrate metabolism</keyword>
<keyword id="KW-0418">Kinase</keyword>
<keyword id="KW-0511">Multifunctional enzyme</keyword>
<keyword id="KW-0547">Nucleotide-binding</keyword>
<keyword id="KW-0548">Nucleotidyltransferase</keyword>
<keyword id="KW-0808">Transferase</keyword>
<protein>
    <recommendedName>
        <fullName evidence="1">Bifunctional protein HldE</fullName>
    </recommendedName>
    <domain>
        <recommendedName>
            <fullName evidence="1">D-beta-D-heptose 7-phosphate kinase</fullName>
            <ecNumber evidence="1">2.7.1.167</ecNumber>
        </recommendedName>
        <alternativeName>
            <fullName evidence="1">D-beta-D-heptose 7-phosphotransferase</fullName>
        </alternativeName>
        <alternativeName>
            <fullName evidence="1">D-glycero-beta-D-manno-heptose-7-phosphate kinase</fullName>
        </alternativeName>
    </domain>
    <domain>
        <recommendedName>
            <fullName evidence="1">D-beta-D-heptose 1-phosphate adenylyltransferase</fullName>
            <ecNumber evidence="1">2.7.7.70</ecNumber>
        </recommendedName>
        <alternativeName>
            <fullName evidence="1">D-glycero-beta-D-manno-heptose 1-phosphate adenylyltransferase</fullName>
        </alternativeName>
    </domain>
</protein>